<sequence length="225" mass="25106">MQTKKLNHAPKTGYMFTVTVKNMGITEYLTAWQAMKDFTQQRTRETPDEIWLLEHPPVYTQGIAGKPEHLLFPSNIPVIKTDRGGQITYHGPGQIIMYLLLDLHRWQLGIRQLVRKMEGAVINLMDEYDIVANGSQDAPGVYVNGAKIASLGLKIRRGACYHGIAFNADMDLAPFVAINPCGYPGLRVTQAKELGISDNKEVLAGKLAQNFIAQLTHRIITPHGR</sequence>
<keyword id="KW-0012">Acyltransferase</keyword>
<keyword id="KW-0963">Cytoplasm</keyword>
<keyword id="KW-0808">Transferase</keyword>
<comment type="function">
    <text evidence="1">Catalyzes the transfer of endogenously produced octanoic acid from octanoyl-acyl-carrier-protein onto the lipoyl domains of lipoate-dependent enzymes. Lipoyl-ACP can also act as a substrate although octanoyl-ACP is likely to be the physiological substrate.</text>
</comment>
<comment type="catalytic activity">
    <reaction evidence="1">
        <text>octanoyl-[ACP] + L-lysyl-[protein] = N(6)-octanoyl-L-lysyl-[protein] + holo-[ACP] + H(+)</text>
        <dbReference type="Rhea" id="RHEA:17665"/>
        <dbReference type="Rhea" id="RHEA-COMP:9636"/>
        <dbReference type="Rhea" id="RHEA-COMP:9685"/>
        <dbReference type="Rhea" id="RHEA-COMP:9752"/>
        <dbReference type="Rhea" id="RHEA-COMP:9928"/>
        <dbReference type="ChEBI" id="CHEBI:15378"/>
        <dbReference type="ChEBI" id="CHEBI:29969"/>
        <dbReference type="ChEBI" id="CHEBI:64479"/>
        <dbReference type="ChEBI" id="CHEBI:78463"/>
        <dbReference type="ChEBI" id="CHEBI:78809"/>
        <dbReference type="EC" id="2.3.1.181"/>
    </reaction>
</comment>
<comment type="pathway">
    <text evidence="1">Protein modification; protein lipoylation via endogenous pathway; protein N(6)-(lipoyl)lysine from octanoyl-[acyl-carrier-protein]: step 1/2.</text>
</comment>
<comment type="subcellular location">
    <subcellularLocation>
        <location evidence="1">Cytoplasm</location>
    </subcellularLocation>
</comment>
<comment type="miscellaneous">
    <text evidence="1">In the reaction, the free carboxyl group of octanoic acid is attached via an amide linkage to the epsilon-amino group of a specific lysine residue of lipoyl domains of lipoate-dependent enzymes.</text>
</comment>
<comment type="similarity">
    <text evidence="1">Belongs to the LipB family.</text>
</comment>
<reference key="1">
    <citation type="journal article" date="2007" name="Environ. Microbiol.">
        <title>Whole-genome analysis of the ammonia-oxidizing bacterium, Nitrosomonas eutropha C91: implications for niche adaptation.</title>
        <authorList>
            <person name="Stein L.Y."/>
            <person name="Arp D.J."/>
            <person name="Berube P.M."/>
            <person name="Chain P.S."/>
            <person name="Hauser L."/>
            <person name="Jetten M.S."/>
            <person name="Klotz M.G."/>
            <person name="Larimer F.W."/>
            <person name="Norton J.M."/>
            <person name="Op den Camp H.J.M."/>
            <person name="Shin M."/>
            <person name="Wei X."/>
        </authorList>
    </citation>
    <scope>NUCLEOTIDE SEQUENCE [LARGE SCALE GENOMIC DNA]</scope>
    <source>
        <strain>DSM 101675 / C91 / Nm57</strain>
    </source>
</reference>
<accession>Q0AI04</accession>
<gene>
    <name evidence="1" type="primary">lipB</name>
    <name type="ordered locus">Neut_0758</name>
</gene>
<dbReference type="EC" id="2.3.1.181" evidence="1"/>
<dbReference type="EMBL" id="CP000450">
    <property type="protein sequence ID" value="ABI59028.1"/>
    <property type="molecule type" value="Genomic_DNA"/>
</dbReference>
<dbReference type="RefSeq" id="WP_011633853.1">
    <property type="nucleotide sequence ID" value="NC_008344.1"/>
</dbReference>
<dbReference type="SMR" id="Q0AI04"/>
<dbReference type="STRING" id="335283.Neut_0758"/>
<dbReference type="KEGG" id="net:Neut_0758"/>
<dbReference type="eggNOG" id="COG0321">
    <property type="taxonomic scope" value="Bacteria"/>
</dbReference>
<dbReference type="HOGENOM" id="CLU_035168_3_1_4"/>
<dbReference type="OrthoDB" id="9787061at2"/>
<dbReference type="UniPathway" id="UPA00538">
    <property type="reaction ID" value="UER00592"/>
</dbReference>
<dbReference type="Proteomes" id="UP000001966">
    <property type="component" value="Chromosome"/>
</dbReference>
<dbReference type="GO" id="GO:0005737">
    <property type="term" value="C:cytoplasm"/>
    <property type="evidence" value="ECO:0007669"/>
    <property type="project" value="UniProtKB-SubCell"/>
</dbReference>
<dbReference type="GO" id="GO:0033819">
    <property type="term" value="F:lipoyl(octanoyl) transferase activity"/>
    <property type="evidence" value="ECO:0007669"/>
    <property type="project" value="UniProtKB-EC"/>
</dbReference>
<dbReference type="GO" id="GO:0036211">
    <property type="term" value="P:protein modification process"/>
    <property type="evidence" value="ECO:0007669"/>
    <property type="project" value="InterPro"/>
</dbReference>
<dbReference type="CDD" id="cd16444">
    <property type="entry name" value="LipB"/>
    <property type="match status" value="1"/>
</dbReference>
<dbReference type="FunFam" id="3.30.930.10:FF:000020">
    <property type="entry name" value="Octanoyltransferase"/>
    <property type="match status" value="1"/>
</dbReference>
<dbReference type="Gene3D" id="3.30.930.10">
    <property type="entry name" value="Bira Bifunctional Protein, Domain 2"/>
    <property type="match status" value="1"/>
</dbReference>
<dbReference type="HAMAP" id="MF_00013">
    <property type="entry name" value="LipB"/>
    <property type="match status" value="1"/>
</dbReference>
<dbReference type="InterPro" id="IPR045864">
    <property type="entry name" value="aa-tRNA-synth_II/BPL/LPL"/>
</dbReference>
<dbReference type="InterPro" id="IPR004143">
    <property type="entry name" value="BPL_LPL_catalytic"/>
</dbReference>
<dbReference type="InterPro" id="IPR000544">
    <property type="entry name" value="Octanoyltransferase"/>
</dbReference>
<dbReference type="InterPro" id="IPR020605">
    <property type="entry name" value="Octanoyltransferase_CS"/>
</dbReference>
<dbReference type="NCBIfam" id="TIGR00214">
    <property type="entry name" value="lipB"/>
    <property type="match status" value="1"/>
</dbReference>
<dbReference type="NCBIfam" id="NF010922">
    <property type="entry name" value="PRK14342.1"/>
    <property type="match status" value="1"/>
</dbReference>
<dbReference type="PANTHER" id="PTHR10993:SF7">
    <property type="entry name" value="LIPOYLTRANSFERASE 2, MITOCHONDRIAL-RELATED"/>
    <property type="match status" value="1"/>
</dbReference>
<dbReference type="PANTHER" id="PTHR10993">
    <property type="entry name" value="OCTANOYLTRANSFERASE"/>
    <property type="match status" value="1"/>
</dbReference>
<dbReference type="Pfam" id="PF21948">
    <property type="entry name" value="LplA-B_cat"/>
    <property type="match status" value="1"/>
</dbReference>
<dbReference type="PIRSF" id="PIRSF016262">
    <property type="entry name" value="LPLase"/>
    <property type="match status" value="1"/>
</dbReference>
<dbReference type="SUPFAM" id="SSF55681">
    <property type="entry name" value="Class II aaRS and biotin synthetases"/>
    <property type="match status" value="1"/>
</dbReference>
<dbReference type="PROSITE" id="PS51733">
    <property type="entry name" value="BPL_LPL_CATALYTIC"/>
    <property type="match status" value="1"/>
</dbReference>
<dbReference type="PROSITE" id="PS01313">
    <property type="entry name" value="LIPB"/>
    <property type="match status" value="1"/>
</dbReference>
<name>LIPB_NITEC</name>
<feature type="chain" id="PRO_0000321653" description="Octanoyltransferase">
    <location>
        <begin position="1"/>
        <end position="225"/>
    </location>
</feature>
<feature type="domain" description="BPL/LPL catalytic" evidence="2">
    <location>
        <begin position="44"/>
        <end position="219"/>
    </location>
</feature>
<feature type="active site" description="Acyl-thioester intermediate" evidence="1">
    <location>
        <position position="181"/>
    </location>
</feature>
<feature type="binding site" evidence="1">
    <location>
        <begin position="83"/>
        <end position="90"/>
    </location>
    <ligand>
        <name>substrate</name>
    </ligand>
</feature>
<feature type="binding site" evidence="1">
    <location>
        <begin position="150"/>
        <end position="152"/>
    </location>
    <ligand>
        <name>substrate</name>
    </ligand>
</feature>
<feature type="binding site" evidence="1">
    <location>
        <begin position="163"/>
        <end position="165"/>
    </location>
    <ligand>
        <name>substrate</name>
    </ligand>
</feature>
<feature type="site" description="Lowers pKa of active site Cys" evidence="1">
    <location>
        <position position="147"/>
    </location>
</feature>
<protein>
    <recommendedName>
        <fullName evidence="1">Octanoyltransferase</fullName>
        <ecNumber evidence="1">2.3.1.181</ecNumber>
    </recommendedName>
    <alternativeName>
        <fullName evidence="1">Lipoate-protein ligase B</fullName>
    </alternativeName>
    <alternativeName>
        <fullName evidence="1">Lipoyl/octanoyl transferase</fullName>
    </alternativeName>
    <alternativeName>
        <fullName evidence="1">Octanoyl-[acyl-carrier-protein]-protein N-octanoyltransferase</fullName>
    </alternativeName>
</protein>
<proteinExistence type="inferred from homology"/>
<evidence type="ECO:0000255" key="1">
    <source>
        <dbReference type="HAMAP-Rule" id="MF_00013"/>
    </source>
</evidence>
<evidence type="ECO:0000255" key="2">
    <source>
        <dbReference type="PROSITE-ProRule" id="PRU01067"/>
    </source>
</evidence>
<organism>
    <name type="scientific">Nitrosomonas eutropha (strain DSM 101675 / C91 / Nm57)</name>
    <dbReference type="NCBI Taxonomy" id="335283"/>
    <lineage>
        <taxon>Bacteria</taxon>
        <taxon>Pseudomonadati</taxon>
        <taxon>Pseudomonadota</taxon>
        <taxon>Betaproteobacteria</taxon>
        <taxon>Nitrosomonadales</taxon>
        <taxon>Nitrosomonadaceae</taxon>
        <taxon>Nitrosomonas</taxon>
    </lineage>
</organism>